<accession>Q8BIV7</accession>
<accession>Q3TZ98</accession>
<keyword id="KW-0472">Membrane</keyword>
<keyword id="KW-0597">Phosphoprotein</keyword>
<keyword id="KW-1185">Reference proteome</keyword>
<keyword id="KW-0762">Sugar transport</keyword>
<keyword id="KW-0769">Symport</keyword>
<keyword id="KW-0812">Transmembrane</keyword>
<keyword id="KW-1133">Transmembrane helix</keyword>
<keyword id="KW-0813">Transport</keyword>
<dbReference type="EMBL" id="AK082651">
    <property type="status" value="NOT_ANNOTATED_CDS"/>
    <property type="molecule type" value="mRNA"/>
</dbReference>
<dbReference type="EMBL" id="AK158002">
    <property type="protein sequence ID" value="BAE34311.1"/>
    <property type="molecule type" value="mRNA"/>
</dbReference>
<dbReference type="CCDS" id="CCDS18973.1"/>
<dbReference type="RefSeq" id="NP_776135.2">
    <property type="nucleotide sequence ID" value="NM_173774.4"/>
</dbReference>
<dbReference type="FunCoup" id="Q8BIV7">
    <property type="interactions" value="181"/>
</dbReference>
<dbReference type="STRING" id="10090.ENSMUSP00000036774"/>
<dbReference type="GlyGen" id="Q8BIV7">
    <property type="glycosylation" value="2 sites"/>
</dbReference>
<dbReference type="iPTMnet" id="Q8BIV7"/>
<dbReference type="PhosphoSitePlus" id="Q8BIV7"/>
<dbReference type="SwissPalm" id="Q8BIV7"/>
<dbReference type="PaxDb" id="10090-ENSMUSP00000036774"/>
<dbReference type="ProteomicsDB" id="260905"/>
<dbReference type="Antibodypedia" id="57179">
    <property type="antibodies" value="14 antibodies from 5 providers"/>
</dbReference>
<dbReference type="DNASU" id="242773"/>
<dbReference type="Ensembl" id="ENSMUST00000037827.10">
    <property type="protein sequence ID" value="ENSMUSP00000036774.4"/>
    <property type="gene ID" value="ENSMUSG00000039838.12"/>
</dbReference>
<dbReference type="GeneID" id="242773"/>
<dbReference type="KEGG" id="mmu:242773"/>
<dbReference type="UCSC" id="uc008vxt.1">
    <property type="organism name" value="mouse"/>
</dbReference>
<dbReference type="AGR" id="MGI:2653235"/>
<dbReference type="CTD" id="50651"/>
<dbReference type="MGI" id="MGI:2653235">
    <property type="gene designation" value="Slc45a1"/>
</dbReference>
<dbReference type="VEuPathDB" id="HostDB:ENSMUSG00000039838"/>
<dbReference type="eggNOG" id="KOG0637">
    <property type="taxonomic scope" value="Eukaryota"/>
</dbReference>
<dbReference type="GeneTree" id="ENSGT00950000182914"/>
<dbReference type="HOGENOM" id="CLU_015081_1_0_1"/>
<dbReference type="InParanoid" id="Q8BIV7"/>
<dbReference type="OMA" id="CDYYQSR"/>
<dbReference type="OrthoDB" id="28755at2759"/>
<dbReference type="PhylomeDB" id="Q8BIV7"/>
<dbReference type="TreeFam" id="TF325412"/>
<dbReference type="BioGRID-ORCS" id="242773">
    <property type="hits" value="0 hits in 76 CRISPR screens"/>
</dbReference>
<dbReference type="PRO" id="PR:Q8BIV7"/>
<dbReference type="Proteomes" id="UP000000589">
    <property type="component" value="Chromosome 4"/>
</dbReference>
<dbReference type="RNAct" id="Q8BIV7">
    <property type="molecule type" value="protein"/>
</dbReference>
<dbReference type="Bgee" id="ENSMUSG00000039838">
    <property type="expression patterns" value="Expressed in primary visual cortex and 58 other cell types or tissues"/>
</dbReference>
<dbReference type="ExpressionAtlas" id="Q8BIV7">
    <property type="expression patterns" value="baseline and differential"/>
</dbReference>
<dbReference type="GO" id="GO:0016020">
    <property type="term" value="C:membrane"/>
    <property type="evidence" value="ECO:0007669"/>
    <property type="project" value="UniProtKB-SubCell"/>
</dbReference>
<dbReference type="GO" id="GO:0005356">
    <property type="term" value="F:D-glucose:proton symporter activity"/>
    <property type="evidence" value="ECO:0000315"/>
    <property type="project" value="UniProtKB"/>
</dbReference>
<dbReference type="GO" id="GO:0015517">
    <property type="term" value="F:galactose:proton symporter activity"/>
    <property type="evidence" value="ECO:0000250"/>
    <property type="project" value="UniProtKB"/>
</dbReference>
<dbReference type="GO" id="GO:1904659">
    <property type="term" value="P:D-glucose transmembrane transport"/>
    <property type="evidence" value="ECO:0000315"/>
    <property type="project" value="UniProtKB"/>
</dbReference>
<dbReference type="GO" id="GO:0015757">
    <property type="term" value="P:galactose transmembrane transport"/>
    <property type="evidence" value="ECO:0000250"/>
    <property type="project" value="UniProtKB"/>
</dbReference>
<dbReference type="FunFam" id="1.20.1250.20:FF:000069">
    <property type="entry name" value="Solute carrier family 45 member 4"/>
    <property type="match status" value="1"/>
</dbReference>
<dbReference type="FunFam" id="1.20.1250.20:FF:000120">
    <property type="entry name" value="Solute carrier family 45, member 1"/>
    <property type="match status" value="1"/>
</dbReference>
<dbReference type="Gene3D" id="1.20.1250.20">
    <property type="entry name" value="MFS general substrate transporter like domains"/>
    <property type="match status" value="2"/>
</dbReference>
<dbReference type="InterPro" id="IPR011701">
    <property type="entry name" value="MFS"/>
</dbReference>
<dbReference type="InterPro" id="IPR036259">
    <property type="entry name" value="MFS_trans_sf"/>
</dbReference>
<dbReference type="PANTHER" id="PTHR19432:SF6">
    <property type="entry name" value="PROTON-ASSOCIATED SUGAR TRANSPORTER A"/>
    <property type="match status" value="1"/>
</dbReference>
<dbReference type="PANTHER" id="PTHR19432">
    <property type="entry name" value="SUGAR TRANSPORTER"/>
    <property type="match status" value="1"/>
</dbReference>
<dbReference type="Pfam" id="PF07690">
    <property type="entry name" value="MFS_1"/>
    <property type="match status" value="1"/>
</dbReference>
<dbReference type="SUPFAM" id="SSF103473">
    <property type="entry name" value="MFS general substrate transporter"/>
    <property type="match status" value="1"/>
</dbReference>
<name>S45A1_MOUSE</name>
<protein>
    <recommendedName>
        <fullName evidence="3">Proton-associated sugar transporter A</fullName>
        <shortName>PAST-A</shortName>
    </recommendedName>
    <alternativeName>
        <fullName>Deleted in neuroblastoma 5 protein homolog</fullName>
        <shortName>DNb-5 homolog</shortName>
    </alternativeName>
    <alternativeName>
        <fullName>Solute carrier family 45 member 1</fullName>
    </alternativeName>
</protein>
<organism>
    <name type="scientific">Mus musculus</name>
    <name type="common">Mouse</name>
    <dbReference type="NCBI Taxonomy" id="10090"/>
    <lineage>
        <taxon>Eukaryota</taxon>
        <taxon>Metazoa</taxon>
        <taxon>Chordata</taxon>
        <taxon>Craniata</taxon>
        <taxon>Vertebrata</taxon>
        <taxon>Euteleostomi</taxon>
        <taxon>Mammalia</taxon>
        <taxon>Eutheria</taxon>
        <taxon>Euarchontoglires</taxon>
        <taxon>Glires</taxon>
        <taxon>Rodentia</taxon>
        <taxon>Myomorpha</taxon>
        <taxon>Muroidea</taxon>
        <taxon>Muridae</taxon>
        <taxon>Murinae</taxon>
        <taxon>Mus</taxon>
        <taxon>Mus</taxon>
    </lineage>
</organism>
<sequence>MIPPASSTPPGEAVIPSVAPQDFWRSPISSYSGSVTGHISHRANNFKRHPKRRKYIRPSPPPPPNTPCPIELVDFGDLHPQRSFWELLFNGCILFGIEFSYAMETAYVTPVLLQMGLPDQLYSLVWFISPILGFLLQPLLGAWSDRCTSRFGRRRPFILVLAIGALLGLSLLLNGRDIGMALADTATNHKWGILLTVCGVVLMDFSADSADNPSHAYMMDVCGPVDQDRGLNIHALMAGLGGGFGYVVGGIHWDKTSFGRALGGQLRVIYVFTAITLSVTTVLTLISIPERPLRPLGEKRTAMKSPSLPLPPSPPVLLEEGAGDALPSTTATSLYASFSSPISPPSPLTPKYGSFISRDSSLTGINEFASSFGTSNIDSVLIDCFTAGHDNYLALPSSVPRQAISVSFPRAPDGFYCQERGLERREGPLTLGSDGDVLRVGSLDTSKPRASGILKRPQTLALPDVAGGNGPETSRRRNVTFSQQVANILLNGVKYESELTGSSEQSEQPLSLRHLCSTIYNMPKALRNLCVNHFLGWLSFEGMLLFYTDFMGEVVFQGDPKAPHTSEAYQKYNSGVTMGCWGMCIYAFSAAFYSAILEKLEECLSVRTLYFIAYLAFGLGTGLATLSRNLYVVLSLCTTYGILFSTLCTLPYSLLCDYYQSKKFAGSSADGTRRGMGVDISLLSCQYFLAQILVSLVLGPLTSAVGSANGVMYFSSLVSFLGCLYSSLCVTYEIPSVDAADEERQPLLLNV</sequence>
<evidence type="ECO:0000250" key="1">
    <source>
        <dbReference type="UniProtKB" id="Q8K4S3"/>
    </source>
</evidence>
<evidence type="ECO:0000255" key="2"/>
<evidence type="ECO:0000305" key="3"/>
<evidence type="ECO:0000312" key="4">
    <source>
        <dbReference type="MGI" id="MGI:2653235"/>
    </source>
</evidence>
<evidence type="ECO:0007744" key="5">
    <source>
    </source>
</evidence>
<proteinExistence type="evidence at protein level"/>
<gene>
    <name evidence="4" type="primary">Slc45a1</name>
    <name type="synonym">Dnb5</name>
</gene>
<reference key="1">
    <citation type="journal article" date="2005" name="Science">
        <title>The transcriptional landscape of the mammalian genome.</title>
        <authorList>
            <person name="Carninci P."/>
            <person name="Kasukawa T."/>
            <person name="Katayama S."/>
            <person name="Gough J."/>
            <person name="Frith M.C."/>
            <person name="Maeda N."/>
            <person name="Oyama R."/>
            <person name="Ravasi T."/>
            <person name="Lenhard B."/>
            <person name="Wells C."/>
            <person name="Kodzius R."/>
            <person name="Shimokawa K."/>
            <person name="Bajic V.B."/>
            <person name="Brenner S.E."/>
            <person name="Batalov S."/>
            <person name="Forrest A.R."/>
            <person name="Zavolan M."/>
            <person name="Davis M.J."/>
            <person name="Wilming L.G."/>
            <person name="Aidinis V."/>
            <person name="Allen J.E."/>
            <person name="Ambesi-Impiombato A."/>
            <person name="Apweiler R."/>
            <person name="Aturaliya R.N."/>
            <person name="Bailey T.L."/>
            <person name="Bansal M."/>
            <person name="Baxter L."/>
            <person name="Beisel K.W."/>
            <person name="Bersano T."/>
            <person name="Bono H."/>
            <person name="Chalk A.M."/>
            <person name="Chiu K.P."/>
            <person name="Choudhary V."/>
            <person name="Christoffels A."/>
            <person name="Clutterbuck D.R."/>
            <person name="Crowe M.L."/>
            <person name="Dalla E."/>
            <person name="Dalrymple B.P."/>
            <person name="de Bono B."/>
            <person name="Della Gatta G."/>
            <person name="di Bernardo D."/>
            <person name="Down T."/>
            <person name="Engstrom P."/>
            <person name="Fagiolini M."/>
            <person name="Faulkner G."/>
            <person name="Fletcher C.F."/>
            <person name="Fukushima T."/>
            <person name="Furuno M."/>
            <person name="Futaki S."/>
            <person name="Gariboldi M."/>
            <person name="Georgii-Hemming P."/>
            <person name="Gingeras T.R."/>
            <person name="Gojobori T."/>
            <person name="Green R.E."/>
            <person name="Gustincich S."/>
            <person name="Harbers M."/>
            <person name="Hayashi Y."/>
            <person name="Hensch T.K."/>
            <person name="Hirokawa N."/>
            <person name="Hill D."/>
            <person name="Huminiecki L."/>
            <person name="Iacono M."/>
            <person name="Ikeo K."/>
            <person name="Iwama A."/>
            <person name="Ishikawa T."/>
            <person name="Jakt M."/>
            <person name="Kanapin A."/>
            <person name="Katoh M."/>
            <person name="Kawasawa Y."/>
            <person name="Kelso J."/>
            <person name="Kitamura H."/>
            <person name="Kitano H."/>
            <person name="Kollias G."/>
            <person name="Krishnan S.P."/>
            <person name="Kruger A."/>
            <person name="Kummerfeld S.K."/>
            <person name="Kurochkin I.V."/>
            <person name="Lareau L.F."/>
            <person name="Lazarevic D."/>
            <person name="Lipovich L."/>
            <person name="Liu J."/>
            <person name="Liuni S."/>
            <person name="McWilliam S."/>
            <person name="Madan Babu M."/>
            <person name="Madera M."/>
            <person name="Marchionni L."/>
            <person name="Matsuda H."/>
            <person name="Matsuzawa S."/>
            <person name="Miki H."/>
            <person name="Mignone F."/>
            <person name="Miyake S."/>
            <person name="Morris K."/>
            <person name="Mottagui-Tabar S."/>
            <person name="Mulder N."/>
            <person name="Nakano N."/>
            <person name="Nakauchi H."/>
            <person name="Ng P."/>
            <person name="Nilsson R."/>
            <person name="Nishiguchi S."/>
            <person name="Nishikawa S."/>
            <person name="Nori F."/>
            <person name="Ohara O."/>
            <person name="Okazaki Y."/>
            <person name="Orlando V."/>
            <person name="Pang K.C."/>
            <person name="Pavan W.J."/>
            <person name="Pavesi G."/>
            <person name="Pesole G."/>
            <person name="Petrovsky N."/>
            <person name="Piazza S."/>
            <person name="Reed J."/>
            <person name="Reid J.F."/>
            <person name="Ring B.Z."/>
            <person name="Ringwald M."/>
            <person name="Rost B."/>
            <person name="Ruan Y."/>
            <person name="Salzberg S.L."/>
            <person name="Sandelin A."/>
            <person name="Schneider C."/>
            <person name="Schoenbach C."/>
            <person name="Sekiguchi K."/>
            <person name="Semple C.A."/>
            <person name="Seno S."/>
            <person name="Sessa L."/>
            <person name="Sheng Y."/>
            <person name="Shibata Y."/>
            <person name="Shimada H."/>
            <person name="Shimada K."/>
            <person name="Silva D."/>
            <person name="Sinclair B."/>
            <person name="Sperling S."/>
            <person name="Stupka E."/>
            <person name="Sugiura K."/>
            <person name="Sultana R."/>
            <person name="Takenaka Y."/>
            <person name="Taki K."/>
            <person name="Tammoja K."/>
            <person name="Tan S.L."/>
            <person name="Tang S."/>
            <person name="Taylor M.S."/>
            <person name="Tegner J."/>
            <person name="Teichmann S.A."/>
            <person name="Ueda H.R."/>
            <person name="van Nimwegen E."/>
            <person name="Verardo R."/>
            <person name="Wei C.L."/>
            <person name="Yagi K."/>
            <person name="Yamanishi H."/>
            <person name="Zabarovsky E."/>
            <person name="Zhu S."/>
            <person name="Zimmer A."/>
            <person name="Hide W."/>
            <person name="Bult C."/>
            <person name="Grimmond S.M."/>
            <person name="Teasdale R.D."/>
            <person name="Liu E.T."/>
            <person name="Brusic V."/>
            <person name="Quackenbush J."/>
            <person name="Wahlestedt C."/>
            <person name="Mattick J.S."/>
            <person name="Hume D.A."/>
            <person name="Kai C."/>
            <person name="Sasaki D."/>
            <person name="Tomaru Y."/>
            <person name="Fukuda S."/>
            <person name="Kanamori-Katayama M."/>
            <person name="Suzuki M."/>
            <person name="Aoki J."/>
            <person name="Arakawa T."/>
            <person name="Iida J."/>
            <person name="Imamura K."/>
            <person name="Itoh M."/>
            <person name="Kato T."/>
            <person name="Kawaji H."/>
            <person name="Kawagashira N."/>
            <person name="Kawashima T."/>
            <person name="Kojima M."/>
            <person name="Kondo S."/>
            <person name="Konno H."/>
            <person name="Nakano K."/>
            <person name="Ninomiya N."/>
            <person name="Nishio T."/>
            <person name="Okada M."/>
            <person name="Plessy C."/>
            <person name="Shibata K."/>
            <person name="Shiraki T."/>
            <person name="Suzuki S."/>
            <person name="Tagami M."/>
            <person name="Waki K."/>
            <person name="Watahiki A."/>
            <person name="Okamura-Oho Y."/>
            <person name="Suzuki H."/>
            <person name="Kawai J."/>
            <person name="Hayashizaki Y."/>
        </authorList>
    </citation>
    <scope>NUCLEOTIDE SEQUENCE [LARGE SCALE MRNA]</scope>
    <source>
        <strain>C57BL/6J</strain>
        <tissue>Cerebellum</tissue>
        <tissue>Inner ear</tissue>
    </source>
</reference>
<reference key="2">
    <citation type="journal article" date="2010" name="Cell">
        <title>A tissue-specific atlas of mouse protein phosphorylation and expression.</title>
        <authorList>
            <person name="Huttlin E.L."/>
            <person name="Jedrychowski M.P."/>
            <person name="Elias J.E."/>
            <person name="Goswami T."/>
            <person name="Rad R."/>
            <person name="Beausoleil S.A."/>
            <person name="Villen J."/>
            <person name="Haas W."/>
            <person name="Sowa M.E."/>
            <person name="Gygi S.P."/>
        </authorList>
    </citation>
    <scope>PHOSPHORYLATION [LARGE SCALE ANALYSIS] AT THR-500</scope>
    <scope>IDENTIFICATION BY MASS SPECTROMETRY [LARGE SCALE ANALYSIS]</scope>
    <source>
        <tissue>Brain</tissue>
    </source>
</reference>
<feature type="chain" id="PRO_0000122515" description="Proton-associated sugar transporter A">
    <location>
        <begin position="1"/>
        <end position="751"/>
    </location>
</feature>
<feature type="transmembrane region" description="Helical" evidence="2">
    <location>
        <begin position="93"/>
        <end position="113"/>
    </location>
</feature>
<feature type="transmembrane region" description="Helical" evidence="2">
    <location>
        <begin position="123"/>
        <end position="143"/>
    </location>
</feature>
<feature type="transmembrane region" description="Helical" evidence="2">
    <location>
        <begin position="155"/>
        <end position="175"/>
    </location>
</feature>
<feature type="transmembrane region" description="Helical" evidence="2">
    <location>
        <begin position="191"/>
        <end position="211"/>
    </location>
</feature>
<feature type="transmembrane region" description="Helical" evidence="2">
    <location>
        <begin position="233"/>
        <end position="253"/>
    </location>
</feature>
<feature type="transmembrane region" description="Helical" evidence="2">
    <location>
        <begin position="268"/>
        <end position="288"/>
    </location>
</feature>
<feature type="transmembrane region" description="Helical" evidence="2">
    <location>
        <begin position="536"/>
        <end position="556"/>
    </location>
</feature>
<feature type="transmembrane region" description="Helical" evidence="2">
    <location>
        <begin position="576"/>
        <end position="596"/>
    </location>
</feature>
<feature type="transmembrane region" description="Helical" evidence="2">
    <location>
        <begin position="606"/>
        <end position="626"/>
    </location>
</feature>
<feature type="transmembrane region" description="Helical" evidence="2">
    <location>
        <begin position="630"/>
        <end position="650"/>
    </location>
</feature>
<feature type="transmembrane region" description="Helical" evidence="2">
    <location>
        <begin position="688"/>
        <end position="708"/>
    </location>
</feature>
<feature type="transmembrane region" description="Helical" evidence="2">
    <location>
        <begin position="710"/>
        <end position="730"/>
    </location>
</feature>
<feature type="modified residue" description="Phosphothreonine" evidence="5">
    <location>
        <position position="500"/>
    </location>
</feature>
<feature type="sequence conflict" description="In Ref. 1; BAE34311." evidence="3" ref="1">
    <original>S</original>
    <variation>R</variation>
    <location>
        <position position="287"/>
    </location>
</feature>
<feature type="sequence conflict" description="In Ref. 1; BAE34311." evidence="3" ref="1">
    <original>S</original>
    <variation>L</variation>
    <location>
        <position position="433"/>
    </location>
</feature>
<comment type="function">
    <text evidence="1">Proton-associated glucose transporter in the brain.</text>
</comment>
<comment type="catalytic activity">
    <reaction evidence="1">
        <text>D-galactose(in) + H(+)(in) = D-galactose(out) + H(+)(out)</text>
        <dbReference type="Rhea" id="RHEA:29019"/>
        <dbReference type="ChEBI" id="CHEBI:4139"/>
        <dbReference type="ChEBI" id="CHEBI:15378"/>
    </reaction>
</comment>
<comment type="catalytic activity">
    <reaction evidence="1">
        <text>D-glucose(out) + H(+)(out) = D-glucose(in) + H(+)(in)</text>
        <dbReference type="Rhea" id="RHEA:69556"/>
        <dbReference type="ChEBI" id="CHEBI:4167"/>
        <dbReference type="ChEBI" id="CHEBI:15378"/>
    </reaction>
</comment>
<comment type="subcellular location">
    <subcellularLocation>
        <location evidence="1">Membrane</location>
        <topology evidence="2">Multi-pass membrane protein</topology>
    </subcellularLocation>
</comment>
<comment type="similarity">
    <text evidence="3">Belongs to the glycoside-pentoside-hexuronide (GPH) cation symporter transporter (TC 2.A.2) family.</text>
</comment>
<comment type="sequence caution" evidence="3">
    <conflict type="frameshift">
        <sequence resource="EMBL" id="AK082651"/>
    </conflict>
</comment>